<keyword id="KW-0325">Glycoprotein</keyword>
<keyword id="KW-0328">Glycosyltransferase</keyword>
<keyword id="KW-0333">Golgi apparatus</keyword>
<keyword id="KW-0443">Lipid metabolism</keyword>
<keyword id="KW-0472">Membrane</keyword>
<keyword id="KW-1185">Reference proteome</keyword>
<keyword id="KW-0735">Signal-anchor</keyword>
<keyword id="KW-0808">Transferase</keyword>
<keyword id="KW-0812">Transmembrane</keyword>
<keyword id="KW-1133">Transmembrane helix</keyword>
<protein>
    <recommendedName>
        <fullName evidence="10">Galactoside alpha-(1,2)-fucosyltransferase 1</fullName>
    </recommendedName>
    <alternativeName>
        <fullName>Alpha(1,2)FT 1</fullName>
    </alternativeName>
    <alternativeName>
        <fullName>Fucosyltransferase 1</fullName>
        <shortName evidence="9">MFUT-1</shortName>
    </alternativeName>
    <alternativeName>
        <fullName>GDP-L-fucose:beta-D-galactoside 2-alpha-L-fucosyltransferase 1</fullName>
    </alternativeName>
    <alternativeName>
        <fullName evidence="10">Type 1 galactoside alpha-(1,2)-fucosyltransferase FUT1</fullName>
        <ecNumber evidence="6">2.4.1.69</ecNumber>
    </alternativeName>
    <alternativeName>
        <fullName evidence="10">Type 2 galactoside alpha-(1,2)-fucosyltransferase FUT1</fullName>
        <ecNumber evidence="2">2.4.1.344</ecNumber>
    </alternativeName>
</protein>
<dbReference type="EC" id="2.4.1.69" evidence="6"/>
<dbReference type="EC" id="2.4.1.344" evidence="2"/>
<dbReference type="EMBL" id="U90553">
    <property type="protein sequence ID" value="AAC53492.1"/>
    <property type="molecule type" value="Genomic_DNA"/>
</dbReference>
<dbReference type="EMBL" id="AF113533">
    <property type="protein sequence ID" value="AAD25352.1"/>
    <property type="molecule type" value="mRNA"/>
</dbReference>
<dbReference type="EMBL" id="Y09883">
    <property type="protein sequence ID" value="CAA71009.1"/>
    <property type="molecule type" value="Genomic_DNA"/>
</dbReference>
<dbReference type="EMBL" id="AK137638">
    <property type="protein sequence ID" value="BAE23444.1"/>
    <property type="molecule type" value="mRNA"/>
</dbReference>
<dbReference type="EMBL" id="AB039104">
    <property type="protein sequence ID" value="BAB68628.1"/>
    <property type="molecule type" value="Genomic_DNA"/>
</dbReference>
<dbReference type="EMBL" id="AB039112">
    <property type="protein sequence ID" value="BAB68636.1"/>
    <property type="molecule type" value="Genomic_DNA"/>
</dbReference>
<dbReference type="EMBL" id="AB039111">
    <property type="protein sequence ID" value="BAB68635.1"/>
    <property type="molecule type" value="Genomic_DNA"/>
</dbReference>
<dbReference type="EMBL" id="AB039109">
    <property type="protein sequence ID" value="BAB68633.1"/>
    <property type="molecule type" value="Genomic_DNA"/>
</dbReference>
<dbReference type="EMBL" id="AB039105">
    <property type="protein sequence ID" value="BAB68629.1"/>
    <property type="molecule type" value="Genomic_DNA"/>
</dbReference>
<dbReference type="EMBL" id="AC149057">
    <property type="status" value="NOT_ANNOTATED_CDS"/>
    <property type="molecule type" value="Genomic_DNA"/>
</dbReference>
<dbReference type="CCDS" id="CCDS21254.1"/>
<dbReference type="RefSeq" id="NP_001258910.1">
    <property type="nucleotide sequence ID" value="NM_001271981.1"/>
</dbReference>
<dbReference type="RefSeq" id="NP_032077.2">
    <property type="nucleotide sequence ID" value="NM_008051.6"/>
</dbReference>
<dbReference type="RefSeq" id="XP_006540679.1">
    <property type="nucleotide sequence ID" value="XM_006540616.3"/>
</dbReference>
<dbReference type="RefSeq" id="XP_036008571.1">
    <property type="nucleotide sequence ID" value="XM_036152678.1"/>
</dbReference>
<dbReference type="FunCoup" id="O09160">
    <property type="interactions" value="195"/>
</dbReference>
<dbReference type="STRING" id="10090.ENSMUSP00000008605"/>
<dbReference type="SwissLipids" id="SLP:000001425"/>
<dbReference type="CAZy" id="GT11">
    <property type="family name" value="Glycosyltransferase Family 11"/>
</dbReference>
<dbReference type="GlyCosmos" id="O09160">
    <property type="glycosylation" value="3 sites, No reported glycans"/>
</dbReference>
<dbReference type="GlyGen" id="O09160">
    <property type="glycosylation" value="5 sites"/>
</dbReference>
<dbReference type="iPTMnet" id="O09160"/>
<dbReference type="PhosphoSitePlus" id="O09160"/>
<dbReference type="PaxDb" id="10090-ENSMUSP00000008605"/>
<dbReference type="ProteomicsDB" id="271650"/>
<dbReference type="ProteomicsDB" id="328835"/>
<dbReference type="Antibodypedia" id="31803">
    <property type="antibodies" value="133 antibodies from 24 providers"/>
</dbReference>
<dbReference type="DNASU" id="14343"/>
<dbReference type="Ensembl" id="ENSMUST00000008605.6">
    <property type="protein sequence ID" value="ENSMUSP00000008605.6"/>
    <property type="gene ID" value="ENSMUSG00000008461.7"/>
</dbReference>
<dbReference type="GeneID" id="14343"/>
<dbReference type="KEGG" id="mmu:14343"/>
<dbReference type="UCSC" id="uc009gwg.2">
    <property type="organism name" value="mouse"/>
</dbReference>
<dbReference type="AGR" id="MGI:109375"/>
<dbReference type="CTD" id="2523"/>
<dbReference type="MGI" id="MGI:109375">
    <property type="gene designation" value="Fut1"/>
</dbReference>
<dbReference type="VEuPathDB" id="HostDB:ENSMUSG00000008461"/>
<dbReference type="eggNOG" id="ENOG502S316">
    <property type="taxonomic scope" value="Eukaryota"/>
</dbReference>
<dbReference type="GeneTree" id="ENSGT00390000001450"/>
<dbReference type="HOGENOM" id="CLU_043399_0_1_1"/>
<dbReference type="InParanoid" id="O09160"/>
<dbReference type="OMA" id="WTIHPDG"/>
<dbReference type="OrthoDB" id="3226at2759"/>
<dbReference type="PhylomeDB" id="O09160"/>
<dbReference type="TreeFam" id="TF315810"/>
<dbReference type="BRENDA" id="2.4.1.69">
    <property type="organism ID" value="3474"/>
</dbReference>
<dbReference type="Reactome" id="R-MMU-9033807">
    <property type="pathway name" value="ABO blood group biosynthesis"/>
</dbReference>
<dbReference type="Reactome" id="R-MMU-9840309">
    <property type="pathway name" value="Glycosphingolipid biosynthesis"/>
</dbReference>
<dbReference type="SABIO-RK" id="O09160"/>
<dbReference type="UniPathway" id="UPA00378"/>
<dbReference type="BioGRID-ORCS" id="14343">
    <property type="hits" value="0 hits in 79 CRISPR screens"/>
</dbReference>
<dbReference type="PRO" id="PR:O09160"/>
<dbReference type="Proteomes" id="UP000000589">
    <property type="component" value="Chromosome 7"/>
</dbReference>
<dbReference type="RNAct" id="O09160">
    <property type="molecule type" value="protein"/>
</dbReference>
<dbReference type="Bgee" id="ENSMUSG00000008461">
    <property type="expression patterns" value="Expressed in lip and 30 other cell types or tissues"/>
</dbReference>
<dbReference type="ExpressionAtlas" id="O09160">
    <property type="expression patterns" value="baseline and differential"/>
</dbReference>
<dbReference type="GO" id="GO:0005615">
    <property type="term" value="C:extracellular space"/>
    <property type="evidence" value="ECO:0007669"/>
    <property type="project" value="Ensembl"/>
</dbReference>
<dbReference type="GO" id="GO:0005794">
    <property type="term" value="C:Golgi apparatus"/>
    <property type="evidence" value="ECO:0000315"/>
    <property type="project" value="MGI"/>
</dbReference>
<dbReference type="GO" id="GO:0032580">
    <property type="term" value="C:Golgi cisterna membrane"/>
    <property type="evidence" value="ECO:0007669"/>
    <property type="project" value="UniProtKB-SubCell"/>
</dbReference>
<dbReference type="GO" id="GO:0031127">
    <property type="term" value="F:alpha-(1,2)-fucosyltransferase activity"/>
    <property type="evidence" value="ECO:0000314"/>
    <property type="project" value="UniProtKB"/>
</dbReference>
<dbReference type="GO" id="GO:0008417">
    <property type="term" value="F:fucosyltransferase activity"/>
    <property type="evidence" value="ECO:0000315"/>
    <property type="project" value="MGI"/>
</dbReference>
<dbReference type="GO" id="GO:0008107">
    <property type="term" value="F:galactoside 2-alpha-L-fucosyltransferase activity"/>
    <property type="evidence" value="ECO:0000314"/>
    <property type="project" value="MGI"/>
</dbReference>
<dbReference type="GO" id="GO:0071377">
    <property type="term" value="P:cellular response to glucagon stimulus"/>
    <property type="evidence" value="ECO:0007669"/>
    <property type="project" value="Ensembl"/>
</dbReference>
<dbReference type="GO" id="GO:0071333">
    <property type="term" value="P:cellular response to glucose stimulus"/>
    <property type="evidence" value="ECO:0007669"/>
    <property type="project" value="Ensembl"/>
</dbReference>
<dbReference type="GO" id="GO:0071404">
    <property type="term" value="P:cellular response to low-density lipoprotein particle stimulus"/>
    <property type="evidence" value="ECO:0007669"/>
    <property type="project" value="Ensembl"/>
</dbReference>
<dbReference type="GO" id="GO:0071466">
    <property type="term" value="P:cellular response to xenobiotic stimulus"/>
    <property type="evidence" value="ECO:0007669"/>
    <property type="project" value="Ensembl"/>
</dbReference>
<dbReference type="GO" id="GO:0030968">
    <property type="term" value="P:endoplasmic reticulum unfolded protein response"/>
    <property type="evidence" value="ECO:0007669"/>
    <property type="project" value="Ensembl"/>
</dbReference>
<dbReference type="GO" id="GO:0072577">
    <property type="term" value="P:endothelial cell apoptotic process"/>
    <property type="evidence" value="ECO:0007669"/>
    <property type="project" value="Ensembl"/>
</dbReference>
<dbReference type="GO" id="GO:0036065">
    <property type="term" value="P:fucosylation"/>
    <property type="evidence" value="ECO:0000314"/>
    <property type="project" value="UniProtKB"/>
</dbReference>
<dbReference type="GO" id="GO:0006629">
    <property type="term" value="P:lipid metabolic process"/>
    <property type="evidence" value="ECO:0007669"/>
    <property type="project" value="UniProtKB-KW"/>
</dbReference>
<dbReference type="GO" id="GO:2000352">
    <property type="term" value="P:negative regulation of endothelial cell apoptotic process"/>
    <property type="evidence" value="ECO:0007669"/>
    <property type="project" value="Ensembl"/>
</dbReference>
<dbReference type="GO" id="GO:0021772">
    <property type="term" value="P:olfactory bulb development"/>
    <property type="evidence" value="ECO:0000315"/>
    <property type="project" value="UniProtKB"/>
</dbReference>
<dbReference type="GO" id="GO:0009312">
    <property type="term" value="P:oligosaccharide biosynthetic process"/>
    <property type="evidence" value="ECO:0000315"/>
    <property type="project" value="MGI"/>
</dbReference>
<dbReference type="GO" id="GO:0001954">
    <property type="term" value="P:positive regulation of cell-matrix adhesion"/>
    <property type="evidence" value="ECO:0000250"/>
    <property type="project" value="UniProtKB"/>
</dbReference>
<dbReference type="GO" id="GO:0010595">
    <property type="term" value="P:positive regulation of endothelial cell migration"/>
    <property type="evidence" value="ECO:0000250"/>
    <property type="project" value="UniProtKB"/>
</dbReference>
<dbReference type="GO" id="GO:1904906">
    <property type="term" value="P:positive regulation of endothelial cell-matrix adhesion via fibronectin"/>
    <property type="evidence" value="ECO:0000250"/>
    <property type="project" value="UniProtKB"/>
</dbReference>
<dbReference type="GO" id="GO:1903672">
    <property type="term" value="P:positive regulation of sprouting angiogenesis"/>
    <property type="evidence" value="ECO:0000250"/>
    <property type="project" value="UniProtKB"/>
</dbReference>
<dbReference type="GO" id="GO:0010898">
    <property type="term" value="P:positive regulation of triglyceride catabolic process"/>
    <property type="evidence" value="ECO:0007669"/>
    <property type="project" value="Ensembl"/>
</dbReference>
<dbReference type="GO" id="GO:0006486">
    <property type="term" value="P:protein glycosylation"/>
    <property type="evidence" value="ECO:0000314"/>
    <property type="project" value="UniProtKB"/>
</dbReference>
<dbReference type="GO" id="GO:0030155">
    <property type="term" value="P:regulation of cell adhesion"/>
    <property type="evidence" value="ECO:0000314"/>
    <property type="project" value="UniProtKB"/>
</dbReference>
<dbReference type="GO" id="GO:0001936">
    <property type="term" value="P:regulation of endothelial cell proliferation"/>
    <property type="evidence" value="ECO:0000315"/>
    <property type="project" value="UniProtKB"/>
</dbReference>
<dbReference type="GO" id="GO:0014823">
    <property type="term" value="P:response to activity"/>
    <property type="evidence" value="ECO:0007669"/>
    <property type="project" value="Ensembl"/>
</dbReference>
<dbReference type="GO" id="GO:1904640">
    <property type="term" value="P:response to methionine"/>
    <property type="evidence" value="ECO:0007669"/>
    <property type="project" value="Ensembl"/>
</dbReference>
<dbReference type="GO" id="GO:0031667">
    <property type="term" value="P:response to nutrient levels"/>
    <property type="evidence" value="ECO:0007669"/>
    <property type="project" value="Ensembl"/>
</dbReference>
<dbReference type="CDD" id="cd11301">
    <property type="entry name" value="Fut1_Fut2_like"/>
    <property type="match status" value="1"/>
</dbReference>
<dbReference type="InterPro" id="IPR002516">
    <property type="entry name" value="Glyco_trans_11"/>
</dbReference>
<dbReference type="PANTHER" id="PTHR11927">
    <property type="entry name" value="GALACTOSIDE 2-L-FUCOSYLTRANSFERASE"/>
    <property type="match status" value="1"/>
</dbReference>
<dbReference type="PANTHER" id="PTHR11927:SF4">
    <property type="entry name" value="GALACTOSIDE ALPHA-(1,2)-FUCOSYLTRANSFERASE 1"/>
    <property type="match status" value="1"/>
</dbReference>
<dbReference type="Pfam" id="PF01531">
    <property type="entry name" value="Glyco_transf_11"/>
    <property type="match status" value="1"/>
</dbReference>
<comment type="function">
    <text evidence="4 6 7">Catalyzes the transfer of L-fucose, from a guanosine diphosphate-beta-L-fucose, to the terminal galactose residue of glycoconjugates through an alpha(1,2) linkage leading to H antigen synthesis that is an intermediate substrate in the synthesis of ABO blood group antigens (PubMed:11368156, PubMed:14967068, PubMed:16884711). H antigen is essential for maturation of the glomerular layer of the main olfactory bulb, in cell migration and early cell-cell contacts during tumor associated angiogenesis (PubMed:16884711). Preferentially fucosylates soluble lactose and to a lesser extent, fucosylates glycolipids gangliosides GA1 and GM1a (PubMed:11368156, PubMed:14967068).</text>
</comment>
<comment type="catalytic activity">
    <reaction evidence="2">
        <text>a beta-D-galactosyl-(1-&gt;4)-N-acetyl-beta-D-glucosaminyl derivative + GDP-beta-L-fucose = an alpha-L-Fuc-(1-&gt;2)-beta-D-Gal-(1-&gt;4)-beta-D-GlcNAc derivative + GDP + H(+)</text>
        <dbReference type="Rhea" id="RHEA:50668"/>
        <dbReference type="ChEBI" id="CHEBI:15378"/>
        <dbReference type="ChEBI" id="CHEBI:57273"/>
        <dbReference type="ChEBI" id="CHEBI:58189"/>
        <dbReference type="ChEBI" id="CHEBI:133507"/>
        <dbReference type="ChEBI" id="CHEBI:133510"/>
        <dbReference type="EC" id="2.4.1.344"/>
    </reaction>
</comment>
<comment type="catalytic activity">
    <reaction evidence="4 6">
        <text>a ganglioside GA1 + GDP-beta-L-fucose = a ganglioside Fuc-GA1 + GDP + H(+)</text>
        <dbReference type="Rhea" id="RHEA:48320"/>
        <dbReference type="ChEBI" id="CHEBI:15378"/>
        <dbReference type="ChEBI" id="CHEBI:57273"/>
        <dbReference type="ChEBI" id="CHEBI:58189"/>
        <dbReference type="ChEBI" id="CHEBI:88069"/>
        <dbReference type="ChEBI" id="CHEBI:90262"/>
    </reaction>
    <physiologicalReaction direction="left-to-right" evidence="11">
        <dbReference type="Rhea" id="RHEA:48321"/>
    </physiologicalReaction>
</comment>
<comment type="catalytic activity">
    <reaction evidence="6">
        <text>a beta-D-Gal-(1-&gt;3)-beta-D-GlcNAc-(1-&gt;3)-beta-D-Gal-(1-&gt;4)-beta-D-Glc-(1&lt;-&gt;1')-Cer(d18:1(4E)) + GDP-beta-L-fucose = alpha-L-fucosyl-(1-&gt;2)- beta-D-galactosyl-(1-&gt;3)-N-acetyl-beta-D-glucosaminyl-(1-&gt;3)-beta-D-galactosyl-(1-&gt;4)-beta-D-glucosyl-(1&lt;-&gt;1')-N-acylsphing-4-enine + GDP + H(+)</text>
        <dbReference type="Rhea" id="RHEA:32175"/>
        <dbReference type="ChEBI" id="CHEBI:15378"/>
        <dbReference type="ChEBI" id="CHEBI:17292"/>
        <dbReference type="ChEBI" id="CHEBI:28743"/>
        <dbReference type="ChEBI" id="CHEBI:57273"/>
        <dbReference type="ChEBI" id="CHEBI:58189"/>
        <dbReference type="EC" id="2.4.1.69"/>
    </reaction>
    <physiologicalReaction direction="left-to-right" evidence="12">
        <dbReference type="Rhea" id="RHEA:32176"/>
    </physiologicalReaction>
</comment>
<comment type="catalytic activity">
    <reaction evidence="6">
        <text>a neolactoside nLc4Cer(d18:1(4E)) + GDP-beta-L-fucose = a neolactoside IV(2)-alpha-Fuc-nLc4Cer(d18:1(4E)) + GDP + H(+)</text>
        <dbReference type="Rhea" id="RHEA:48304"/>
        <dbReference type="ChEBI" id="CHEBI:15378"/>
        <dbReference type="ChEBI" id="CHEBI:17006"/>
        <dbReference type="ChEBI" id="CHEBI:28691"/>
        <dbReference type="ChEBI" id="CHEBI:57273"/>
        <dbReference type="ChEBI" id="CHEBI:58189"/>
    </reaction>
    <physiologicalReaction direction="left-to-right" evidence="12">
        <dbReference type="Rhea" id="RHEA:48305"/>
    </physiologicalReaction>
</comment>
<comment type="catalytic activity">
    <reaction evidence="1">
        <text>a ganglioside GM1 + GDP-beta-L-fucose = a ganglioside Fuc-GM1 + GDP + H(+)</text>
        <dbReference type="Rhea" id="RHEA:48292"/>
        <dbReference type="ChEBI" id="CHEBI:15378"/>
        <dbReference type="ChEBI" id="CHEBI:57273"/>
        <dbReference type="ChEBI" id="CHEBI:58189"/>
        <dbReference type="ChEBI" id="CHEBI:82639"/>
        <dbReference type="ChEBI" id="CHEBI:90189"/>
    </reaction>
    <physiologicalReaction direction="left-to-right" evidence="1">
        <dbReference type="Rhea" id="RHEA:48293"/>
    </physiologicalReaction>
</comment>
<comment type="catalytic activity">
    <reaction evidence="1">
        <text>beta-D-galactosyl-(1-&gt;3)-N-acetyl-D-galactosamine + GDP-beta-L-fucose = alpha-L-fucosyl-(1-&gt;2)-beta-D-galactosyl-(1-&gt;3)-N-acetyl-D-galactosamine + GDP + H(+)</text>
        <dbReference type="Rhea" id="RHEA:62964"/>
        <dbReference type="ChEBI" id="CHEBI:15378"/>
        <dbReference type="ChEBI" id="CHEBI:57273"/>
        <dbReference type="ChEBI" id="CHEBI:58189"/>
        <dbReference type="ChEBI" id="CHEBI:84728"/>
        <dbReference type="ChEBI" id="CHEBI:546807"/>
    </reaction>
    <physiologicalReaction direction="left-to-right" evidence="1">
        <dbReference type="Rhea" id="RHEA:62965"/>
    </physiologicalReaction>
</comment>
<comment type="biophysicochemical properties">
    <kinetics>
        <KM evidence="4">28.85 mM for phenyl-beta-D-Galactoside</KM>
        <KM evidence="4">29.09 mM for lactose</KM>
        <KM evidence="4">0.24 mM for ganglioside GA1</KM>
        <KM evidence="6">22.5 uM for ganglioside GA1</KM>
        <KM evidence="6">10.8 uM for nLc4Cer</KM>
        <KM evidence="6">6.2 uM for Lc4Cer</KM>
        <KM evidence="6">4.3 uM for GM1</KM>
    </kinetics>
</comment>
<comment type="pathway">
    <text evidence="2">Protein modification; protein glycosylation.</text>
</comment>
<comment type="subcellular location">
    <subcellularLocation>
        <location evidence="10">Golgi apparatus</location>
        <location evidence="10">Golgi stack membrane</location>
        <topology evidence="11">Single-pass type II membrane protein</topology>
    </subcellularLocation>
    <text evidence="10">Membrane-bound form in trans cisternae of Golgi.</text>
</comment>
<comment type="tissue specificity">
    <text evidence="4 8">In the adult, highly expressed in pancreas, testis and epididymis and to a lesser extent in thymus, lung, stomach, small intestine, colon, spleen and uterus. Not expressed in brain, heart, skeletal muscle, kidney, liver and bone marrow (PubMed:9355741). Expressed in epididymis and testis (PubMed:11368156).</text>
</comment>
<comment type="disruption phenotype">
    <text evidence="5">Homozygous mutant knockout mice for Fut1 develop normally, exhibit no gross phenotypic abnormalities and the Fucalpha(1--&gt;2)Galbeta epitope is absent from the epithelia of the epididymis mice.</text>
</comment>
<comment type="miscellaneous">
    <text>In mouse, there are three genes (Fut1, Fut2 and Sec1) which encode galactoside 2-L-fucosyltransferase.</text>
</comment>
<comment type="similarity">
    <text evidence="10">Belongs to the glycosyltransferase 11 family.</text>
</comment>
<comment type="online information" name="Functional Glycomics Gateway - GTase">
    <link uri="http://www.functionalglycomics.org/glycomics/molecule/jsp/glycoEnzyme/viewGlycoEnzyme.jsp?gbpId=gt_mou_611"/>
    <text>Fucosyltransferase 1</text>
</comment>
<evidence type="ECO:0000250" key="1">
    <source>
        <dbReference type="UniProtKB" id="F6Q1T7"/>
    </source>
</evidence>
<evidence type="ECO:0000250" key="2">
    <source>
        <dbReference type="UniProtKB" id="P19526"/>
    </source>
</evidence>
<evidence type="ECO:0000255" key="3"/>
<evidence type="ECO:0000269" key="4">
    <source>
    </source>
</evidence>
<evidence type="ECO:0000269" key="5">
    <source>
    </source>
</evidence>
<evidence type="ECO:0000269" key="6">
    <source>
    </source>
</evidence>
<evidence type="ECO:0000269" key="7">
    <source>
    </source>
</evidence>
<evidence type="ECO:0000269" key="8">
    <source>
    </source>
</evidence>
<evidence type="ECO:0000303" key="9">
    <source>
    </source>
</evidence>
<evidence type="ECO:0000305" key="10"/>
<evidence type="ECO:0000305" key="11">
    <source>
    </source>
</evidence>
<evidence type="ECO:0000305" key="12">
    <source>
    </source>
</evidence>
<evidence type="ECO:0000312" key="13">
    <source>
        <dbReference type="MGI" id="MGI:109375"/>
    </source>
</evidence>
<sequence>MWTPSRRQLCLAFLLVCVLSAGSFFFHLNGGNFFRNGLTLSVLCSDYHLLKSPVAMVCLPHPLQTSNGSPSCPEQSSSLSGTWTITPGGRFGNQMGQYATLLALAQLNGRQAFIQPEMHAALAPVFRISLPVLDPEVDSLTPWQHLVLHDWMSEEYSHLEDPFLKLSGFPCSWTFFHHLREQIRREFTLHNHLREGAQYLLSGLRIGPAGIRPHTFVGVHVRRGDYLEVMPNRWKGVVGDRAYLQQAMDWFRARHKDPIFVVTSNGMKWCLENIDTSHGDVVFAGNGQEGTPGKDFALLTQCNHTIMTIGTFGFWAAYLAGGDTVYLANFTLPDSEFLKIFRPEAAFLPEWVGINADLSPLQAQFDPWKPDSLFRLV</sequence>
<reference key="1">
    <citation type="journal article" date="1997" name="Biochem. J.">
        <title>Molecular cloning, chromosomal assignment and tissue-specific expression of a murine alpha(1,2)fucosyltransferase expressed in thymic and epididymal epithelial cells.</title>
        <authorList>
            <person name="Domino S.E."/>
            <person name="Hiraiwa N."/>
            <person name="Lowe J.B."/>
        </authorList>
    </citation>
    <scope>NUCLEOTIDE SEQUENCE [GENOMIC DNA]</scope>
    <scope>TISSUE SPECIFICITY</scope>
    <source>
        <strain>NIH Swiss</strain>
    </source>
</reference>
<reference key="2">
    <citation type="journal article" date="2001" name="Arch. Biochem. Biophys.">
        <title>Characterization of three members of murine alpha1,2-fucosyltransferases: change in the expression of the Se gene in the intestine of mice after administration of microbes.</title>
        <authorList>
            <person name="Lin B."/>
            <person name="Saito M."/>
            <person name="Sakakibara Y."/>
            <person name="Hayashi Y."/>
            <person name="Yanagisawa M."/>
            <person name="Iwamori M."/>
        </authorList>
    </citation>
    <scope>NUCLEOTIDE SEQUENCE [MRNA]</scope>
    <scope>TISSUE SPECIFICITY</scope>
    <scope>CATALYTIC ACTIVITY</scope>
    <scope>FUNCTION</scope>
    <scope>BIOPHYSICOCHEMICAL PROPERTIES</scope>
</reference>
<reference key="3">
    <citation type="submission" date="1996-12" db="EMBL/GenBank/DDBJ databases">
        <title>Molecular cloning and expression of a mouse GDP-L-Fucose: beta-D-Galactoside 2-alpha-L-Fucosyltransferase.</title>
        <authorList>
            <person name="Hitoshi S."/>
            <person name="Kusunoki S."/>
            <person name="Kanazawa I."/>
            <person name="Tsuji S."/>
        </authorList>
    </citation>
    <scope>NUCLEOTIDE SEQUENCE [GENOMIC DNA]</scope>
    <source>
        <strain>ICR</strain>
        <tissue>Brain</tissue>
    </source>
</reference>
<reference key="4">
    <citation type="journal article" date="2005" name="Science">
        <title>The transcriptional landscape of the mammalian genome.</title>
        <authorList>
            <person name="Carninci P."/>
            <person name="Kasukawa T."/>
            <person name="Katayama S."/>
            <person name="Gough J."/>
            <person name="Frith M.C."/>
            <person name="Maeda N."/>
            <person name="Oyama R."/>
            <person name="Ravasi T."/>
            <person name="Lenhard B."/>
            <person name="Wells C."/>
            <person name="Kodzius R."/>
            <person name="Shimokawa K."/>
            <person name="Bajic V.B."/>
            <person name="Brenner S.E."/>
            <person name="Batalov S."/>
            <person name="Forrest A.R."/>
            <person name="Zavolan M."/>
            <person name="Davis M.J."/>
            <person name="Wilming L.G."/>
            <person name="Aidinis V."/>
            <person name="Allen J.E."/>
            <person name="Ambesi-Impiombato A."/>
            <person name="Apweiler R."/>
            <person name="Aturaliya R.N."/>
            <person name="Bailey T.L."/>
            <person name="Bansal M."/>
            <person name="Baxter L."/>
            <person name="Beisel K.W."/>
            <person name="Bersano T."/>
            <person name="Bono H."/>
            <person name="Chalk A.M."/>
            <person name="Chiu K.P."/>
            <person name="Choudhary V."/>
            <person name="Christoffels A."/>
            <person name="Clutterbuck D.R."/>
            <person name="Crowe M.L."/>
            <person name="Dalla E."/>
            <person name="Dalrymple B.P."/>
            <person name="de Bono B."/>
            <person name="Della Gatta G."/>
            <person name="di Bernardo D."/>
            <person name="Down T."/>
            <person name="Engstrom P."/>
            <person name="Fagiolini M."/>
            <person name="Faulkner G."/>
            <person name="Fletcher C.F."/>
            <person name="Fukushima T."/>
            <person name="Furuno M."/>
            <person name="Futaki S."/>
            <person name="Gariboldi M."/>
            <person name="Georgii-Hemming P."/>
            <person name="Gingeras T.R."/>
            <person name="Gojobori T."/>
            <person name="Green R.E."/>
            <person name="Gustincich S."/>
            <person name="Harbers M."/>
            <person name="Hayashi Y."/>
            <person name="Hensch T.K."/>
            <person name="Hirokawa N."/>
            <person name="Hill D."/>
            <person name="Huminiecki L."/>
            <person name="Iacono M."/>
            <person name="Ikeo K."/>
            <person name="Iwama A."/>
            <person name="Ishikawa T."/>
            <person name="Jakt M."/>
            <person name="Kanapin A."/>
            <person name="Katoh M."/>
            <person name="Kawasawa Y."/>
            <person name="Kelso J."/>
            <person name="Kitamura H."/>
            <person name="Kitano H."/>
            <person name="Kollias G."/>
            <person name="Krishnan S.P."/>
            <person name="Kruger A."/>
            <person name="Kummerfeld S.K."/>
            <person name="Kurochkin I.V."/>
            <person name="Lareau L.F."/>
            <person name="Lazarevic D."/>
            <person name="Lipovich L."/>
            <person name="Liu J."/>
            <person name="Liuni S."/>
            <person name="McWilliam S."/>
            <person name="Madan Babu M."/>
            <person name="Madera M."/>
            <person name="Marchionni L."/>
            <person name="Matsuda H."/>
            <person name="Matsuzawa S."/>
            <person name="Miki H."/>
            <person name="Mignone F."/>
            <person name="Miyake S."/>
            <person name="Morris K."/>
            <person name="Mottagui-Tabar S."/>
            <person name="Mulder N."/>
            <person name="Nakano N."/>
            <person name="Nakauchi H."/>
            <person name="Ng P."/>
            <person name="Nilsson R."/>
            <person name="Nishiguchi S."/>
            <person name="Nishikawa S."/>
            <person name="Nori F."/>
            <person name="Ohara O."/>
            <person name="Okazaki Y."/>
            <person name="Orlando V."/>
            <person name="Pang K.C."/>
            <person name="Pavan W.J."/>
            <person name="Pavesi G."/>
            <person name="Pesole G."/>
            <person name="Petrovsky N."/>
            <person name="Piazza S."/>
            <person name="Reed J."/>
            <person name="Reid J.F."/>
            <person name="Ring B.Z."/>
            <person name="Ringwald M."/>
            <person name="Rost B."/>
            <person name="Ruan Y."/>
            <person name="Salzberg S.L."/>
            <person name="Sandelin A."/>
            <person name="Schneider C."/>
            <person name="Schoenbach C."/>
            <person name="Sekiguchi K."/>
            <person name="Semple C.A."/>
            <person name="Seno S."/>
            <person name="Sessa L."/>
            <person name="Sheng Y."/>
            <person name="Shibata Y."/>
            <person name="Shimada H."/>
            <person name="Shimada K."/>
            <person name="Silva D."/>
            <person name="Sinclair B."/>
            <person name="Sperling S."/>
            <person name="Stupka E."/>
            <person name="Sugiura K."/>
            <person name="Sultana R."/>
            <person name="Takenaka Y."/>
            <person name="Taki K."/>
            <person name="Tammoja K."/>
            <person name="Tan S.L."/>
            <person name="Tang S."/>
            <person name="Taylor M.S."/>
            <person name="Tegner J."/>
            <person name="Teichmann S.A."/>
            <person name="Ueda H.R."/>
            <person name="van Nimwegen E."/>
            <person name="Verardo R."/>
            <person name="Wei C.L."/>
            <person name="Yagi K."/>
            <person name="Yamanishi H."/>
            <person name="Zabarovsky E."/>
            <person name="Zhu S."/>
            <person name="Zimmer A."/>
            <person name="Hide W."/>
            <person name="Bult C."/>
            <person name="Grimmond S.M."/>
            <person name="Teasdale R.D."/>
            <person name="Liu E.T."/>
            <person name="Brusic V."/>
            <person name="Quackenbush J."/>
            <person name="Wahlestedt C."/>
            <person name="Mattick J.S."/>
            <person name="Hume D.A."/>
            <person name="Kai C."/>
            <person name="Sasaki D."/>
            <person name="Tomaru Y."/>
            <person name="Fukuda S."/>
            <person name="Kanamori-Katayama M."/>
            <person name="Suzuki M."/>
            <person name="Aoki J."/>
            <person name="Arakawa T."/>
            <person name="Iida J."/>
            <person name="Imamura K."/>
            <person name="Itoh M."/>
            <person name="Kato T."/>
            <person name="Kawaji H."/>
            <person name="Kawagashira N."/>
            <person name="Kawashima T."/>
            <person name="Kojima M."/>
            <person name="Kondo S."/>
            <person name="Konno H."/>
            <person name="Nakano K."/>
            <person name="Ninomiya N."/>
            <person name="Nishio T."/>
            <person name="Okada M."/>
            <person name="Plessy C."/>
            <person name="Shibata K."/>
            <person name="Shiraki T."/>
            <person name="Suzuki S."/>
            <person name="Tagami M."/>
            <person name="Waki K."/>
            <person name="Watahiki A."/>
            <person name="Okamura-Oho Y."/>
            <person name="Suzuki H."/>
            <person name="Kawai J."/>
            <person name="Hayashizaki Y."/>
        </authorList>
    </citation>
    <scope>NUCLEOTIDE SEQUENCE [LARGE SCALE MRNA]</scope>
    <source>
        <strain>C57BL/6J</strain>
        <tissue>Vagina</tissue>
    </source>
</reference>
<reference key="5">
    <citation type="journal article" date="2008" name="Genes Genet. Syst.">
        <title>Mosaic genealogy of the Mus musculus genome revealed by 21 nuclear genes from its three subspecies.</title>
        <authorList>
            <person name="Liu Y."/>
            <person name="Takahashi A."/>
            <person name="Kitano T."/>
            <person name="Koide T."/>
            <person name="Shiroishi T."/>
            <person name="Moriwaki K."/>
            <person name="Saitou N."/>
        </authorList>
    </citation>
    <scope>NUCLEOTIDE SEQUENCE [LARGE SCALE GENOMIC DNA]</scope>
    <source>
        <strain>C57BL/10</strain>
    </source>
</reference>
<reference key="6">
    <citation type="journal article" date="2009" name="PLoS Biol.">
        <title>Lineage-specific biology revealed by a finished genome assembly of the mouse.</title>
        <authorList>
            <person name="Church D.M."/>
            <person name="Goodstadt L."/>
            <person name="Hillier L.W."/>
            <person name="Zody M.C."/>
            <person name="Goldstein S."/>
            <person name="She X."/>
            <person name="Bult C.J."/>
            <person name="Agarwala R."/>
            <person name="Cherry J.L."/>
            <person name="DiCuccio M."/>
            <person name="Hlavina W."/>
            <person name="Kapustin Y."/>
            <person name="Meric P."/>
            <person name="Maglott D."/>
            <person name="Birtle Z."/>
            <person name="Marques A.C."/>
            <person name="Graves T."/>
            <person name="Zhou S."/>
            <person name="Teague B."/>
            <person name="Potamousis K."/>
            <person name="Churas C."/>
            <person name="Place M."/>
            <person name="Herschleb J."/>
            <person name="Runnheim R."/>
            <person name="Forrest D."/>
            <person name="Amos-Landgraf J."/>
            <person name="Schwartz D.C."/>
            <person name="Cheng Z."/>
            <person name="Lindblad-Toh K."/>
            <person name="Eichler E.E."/>
            <person name="Ponting C.P."/>
        </authorList>
    </citation>
    <scope>NUCLEOTIDE SEQUENCE [LARGE SCALE GENOMIC DNA]</scope>
    <source>
        <strain>C57BL/6J</strain>
    </source>
</reference>
<reference key="7">
    <citation type="journal article" date="2004" name="Biochem. J.">
        <title>Tissue-specific loss of fucosylated glycolipids in mice with targeted deletion of alpha(1,2)fucosyltransferase genes.</title>
        <authorList>
            <person name="Iwamori M."/>
            <person name="Domino S.E."/>
        </authorList>
    </citation>
    <scope>CATALYTIC ACTIVITY</scope>
    <scope>FUNCTION</scope>
    <scope>BIOPHYSICOCHEMICAL PROPERTIES</scope>
</reference>
<reference key="8">
    <citation type="journal article" date="2001" name="Mol. Cell. Biol.">
        <title>Deficiency of reproductive tract alpha(1,2)fucosylated glycans and normal fertility in mice with targeted deletions of the FUT1 or FUT2 alpha(1,2)fucosyltransferase locus.</title>
        <authorList>
            <person name="Domino S.E."/>
            <person name="Zhang L."/>
            <person name="Gillespie P.J."/>
            <person name="Saunders T.L."/>
            <person name="Lowe J.B."/>
        </authorList>
    </citation>
    <scope>DISRUPTION PHENOTYPE</scope>
</reference>
<reference key="9">
    <citation type="journal article" date="2006" name="Dev. Biol.">
        <title>Genetic manipulation of blood group carbohydrates alters development and pathfinding of primary sensory axons of the olfactory systems.</title>
        <authorList>
            <person name="St John J.A."/>
            <person name="Claxton C."/>
            <person name="Robinson M.W."/>
            <person name="Yamamoto F."/>
            <person name="Domino S.E."/>
            <person name="Key B."/>
        </authorList>
    </citation>
    <scope>FUNCTION</scope>
</reference>
<proteinExistence type="evidence at protein level"/>
<name>FUT1_MOUSE</name>
<gene>
    <name evidence="13" type="primary">Fut1</name>
</gene>
<feature type="chain" id="PRO_0000149098" description="Galactoside alpha-(1,2)-fucosyltransferase 1">
    <location>
        <begin position="1"/>
        <end position="377"/>
    </location>
</feature>
<feature type="topological domain" description="Cytoplasmic" evidence="3">
    <location>
        <begin position="1"/>
        <end position="8"/>
    </location>
</feature>
<feature type="transmembrane region" description="Helical; Signal-anchor for type II membrane protein" evidence="3">
    <location>
        <begin position="9"/>
        <end position="26"/>
    </location>
</feature>
<feature type="topological domain" description="Lumenal" evidence="3">
    <location>
        <begin position="27"/>
        <end position="377"/>
    </location>
</feature>
<feature type="glycosylation site" description="N-linked (GlcNAc...) asparagine" evidence="3">
    <location>
        <position position="67"/>
    </location>
</feature>
<feature type="glycosylation site" description="N-linked (GlcNAc...) asparagine" evidence="3">
    <location>
        <position position="303"/>
    </location>
</feature>
<feature type="glycosylation site" description="N-linked (GlcNAc...) asparagine" evidence="3">
    <location>
        <position position="329"/>
    </location>
</feature>
<feature type="sequence conflict" description="In Ref. 1; AAC53492." evidence="10" ref="1">
    <original>A</original>
    <variation>T</variation>
    <location>
        <position position="12"/>
    </location>
</feature>
<feature type="sequence conflict" description="In Ref. 1; AAC53492." evidence="10" ref="1">
    <original>GIRP</original>
    <variation>SPA</variation>
    <location>
        <begin position="210"/>
        <end position="213"/>
    </location>
</feature>
<organism>
    <name type="scientific">Mus musculus</name>
    <name type="common">Mouse</name>
    <dbReference type="NCBI Taxonomy" id="10090"/>
    <lineage>
        <taxon>Eukaryota</taxon>
        <taxon>Metazoa</taxon>
        <taxon>Chordata</taxon>
        <taxon>Craniata</taxon>
        <taxon>Vertebrata</taxon>
        <taxon>Euteleostomi</taxon>
        <taxon>Mammalia</taxon>
        <taxon>Eutheria</taxon>
        <taxon>Euarchontoglires</taxon>
        <taxon>Glires</taxon>
        <taxon>Rodentia</taxon>
        <taxon>Myomorpha</taxon>
        <taxon>Muroidea</taxon>
        <taxon>Muridae</taxon>
        <taxon>Murinae</taxon>
        <taxon>Mus</taxon>
        <taxon>Mus</taxon>
    </lineage>
</organism>
<accession>O09160</accession>
<accession>P97327</accession>